<name>CMOB_KLEP3</name>
<keyword id="KW-0808">Transferase</keyword>
<keyword id="KW-0819">tRNA processing</keyword>
<feature type="chain" id="PRO_1000201300" description="tRNA U34 carboxymethyltransferase">
    <location>
        <begin position="1"/>
        <end position="334"/>
    </location>
</feature>
<feature type="binding site" evidence="1">
    <location>
        <position position="91"/>
    </location>
    <ligand>
        <name>carboxy-S-adenosyl-L-methionine</name>
        <dbReference type="ChEBI" id="CHEBI:134278"/>
    </ligand>
</feature>
<feature type="binding site" evidence="1">
    <location>
        <position position="105"/>
    </location>
    <ligand>
        <name>carboxy-S-adenosyl-L-methionine</name>
        <dbReference type="ChEBI" id="CHEBI:134278"/>
    </ligand>
</feature>
<feature type="binding site" evidence="1">
    <location>
        <position position="110"/>
    </location>
    <ligand>
        <name>carboxy-S-adenosyl-L-methionine</name>
        <dbReference type="ChEBI" id="CHEBI:134278"/>
    </ligand>
</feature>
<feature type="binding site" evidence="1">
    <location>
        <position position="130"/>
    </location>
    <ligand>
        <name>carboxy-S-adenosyl-L-methionine</name>
        <dbReference type="ChEBI" id="CHEBI:134278"/>
    </ligand>
</feature>
<feature type="binding site" evidence="1">
    <location>
        <begin position="152"/>
        <end position="154"/>
    </location>
    <ligand>
        <name>carboxy-S-adenosyl-L-methionine</name>
        <dbReference type="ChEBI" id="CHEBI:134278"/>
    </ligand>
</feature>
<feature type="binding site" evidence="1">
    <location>
        <begin position="181"/>
        <end position="182"/>
    </location>
    <ligand>
        <name>carboxy-S-adenosyl-L-methionine</name>
        <dbReference type="ChEBI" id="CHEBI:134278"/>
    </ligand>
</feature>
<feature type="binding site" evidence="1">
    <location>
        <position position="196"/>
    </location>
    <ligand>
        <name>carboxy-S-adenosyl-L-methionine</name>
        <dbReference type="ChEBI" id="CHEBI:134278"/>
    </ligand>
</feature>
<feature type="binding site" evidence="1">
    <location>
        <position position="200"/>
    </location>
    <ligand>
        <name>carboxy-S-adenosyl-L-methionine</name>
        <dbReference type="ChEBI" id="CHEBI:134278"/>
    </ligand>
</feature>
<feature type="binding site" evidence="1">
    <location>
        <position position="315"/>
    </location>
    <ligand>
        <name>carboxy-S-adenosyl-L-methionine</name>
        <dbReference type="ChEBI" id="CHEBI:134278"/>
    </ligand>
</feature>
<protein>
    <recommendedName>
        <fullName evidence="1">tRNA U34 carboxymethyltransferase</fullName>
        <ecNumber evidence="1">2.5.1.-</ecNumber>
    </recommendedName>
</protein>
<comment type="function">
    <text evidence="1">Catalyzes carboxymethyl transfer from carboxy-S-adenosyl-L-methionine (Cx-SAM) to 5-hydroxyuridine (ho5U) to form 5-carboxymethoxyuridine (cmo5U) at position 34 in tRNAs.</text>
</comment>
<comment type="catalytic activity">
    <reaction evidence="1">
        <text>carboxy-S-adenosyl-L-methionine + 5-hydroxyuridine(34) in tRNA = 5-carboxymethoxyuridine(34) in tRNA + S-adenosyl-L-homocysteine + H(+)</text>
        <dbReference type="Rhea" id="RHEA:52848"/>
        <dbReference type="Rhea" id="RHEA-COMP:13381"/>
        <dbReference type="Rhea" id="RHEA-COMP:13383"/>
        <dbReference type="ChEBI" id="CHEBI:15378"/>
        <dbReference type="ChEBI" id="CHEBI:57856"/>
        <dbReference type="ChEBI" id="CHEBI:134278"/>
        <dbReference type="ChEBI" id="CHEBI:136877"/>
        <dbReference type="ChEBI" id="CHEBI:136879"/>
    </reaction>
</comment>
<comment type="subunit">
    <text evidence="1">Homotetramer.</text>
</comment>
<comment type="similarity">
    <text evidence="1">Belongs to the class I-like SAM-binding methyltransferase superfamily. CmoB family.</text>
</comment>
<accession>B5XPZ5</accession>
<proteinExistence type="inferred from homology"/>
<reference key="1">
    <citation type="journal article" date="2008" name="PLoS Genet.">
        <title>Complete genome sequence of the N2-fixing broad host range endophyte Klebsiella pneumoniae 342 and virulence predictions verified in mice.</title>
        <authorList>
            <person name="Fouts D.E."/>
            <person name="Tyler H.L."/>
            <person name="DeBoy R.T."/>
            <person name="Daugherty S."/>
            <person name="Ren Q."/>
            <person name="Badger J.H."/>
            <person name="Durkin A.S."/>
            <person name="Huot H."/>
            <person name="Shrivastava S."/>
            <person name="Kothari S."/>
            <person name="Dodson R.J."/>
            <person name="Mohamoud Y."/>
            <person name="Khouri H."/>
            <person name="Roesch L.F.W."/>
            <person name="Krogfelt K.A."/>
            <person name="Struve C."/>
            <person name="Triplett E.W."/>
            <person name="Methe B.A."/>
        </authorList>
    </citation>
    <scope>NUCLEOTIDE SEQUENCE [LARGE SCALE GENOMIC DNA]</scope>
    <source>
        <strain>342</strain>
    </source>
</reference>
<organism>
    <name type="scientific">Klebsiella pneumoniae (strain 342)</name>
    <dbReference type="NCBI Taxonomy" id="507522"/>
    <lineage>
        <taxon>Bacteria</taxon>
        <taxon>Pseudomonadati</taxon>
        <taxon>Pseudomonadota</taxon>
        <taxon>Gammaproteobacteria</taxon>
        <taxon>Enterobacterales</taxon>
        <taxon>Enterobacteriaceae</taxon>
        <taxon>Klebsiella/Raoultella group</taxon>
        <taxon>Klebsiella</taxon>
        <taxon>Klebsiella pneumoniae complex</taxon>
    </lineage>
</organism>
<evidence type="ECO:0000255" key="1">
    <source>
        <dbReference type="HAMAP-Rule" id="MF_01590"/>
    </source>
</evidence>
<gene>
    <name evidence="1" type="primary">cmoB</name>
    <name type="ordered locus">KPK_1899</name>
</gene>
<sequence>MIDFSNFYQLIAKSPLSHWLETLPAQVAAWQREALHGKFREWERAVEFLPELTPWRLDLLHSVTAESETPLSEGHQLRVENLLKNLMPWRKGPYSLYGINIDTEWRSDWKWERVLPHLSDLTGRTILDVGCGSGYHMWRMIGAGAHLAVGIDPTQLFLCQFEAVRKLLGNDQRAHLLPLGIEQLPALEAFDTVFSMGVLYHRRSPLDHLWQLKDQLAPGGELVLETLVVEGDENTVLVPGDRYAQMRNVYFIPSAAALKMWLEKCGFIDVRIVDACVTSTDEQRRTEWMTSESLADFLDPQDQRKTVEGYPAPLRAVIIATKPETQQSLAKKAR</sequence>
<dbReference type="EC" id="2.5.1.-" evidence="1"/>
<dbReference type="EMBL" id="CP000964">
    <property type="protein sequence ID" value="ACI11525.1"/>
    <property type="molecule type" value="Genomic_DNA"/>
</dbReference>
<dbReference type="SMR" id="B5XPZ5"/>
<dbReference type="KEGG" id="kpe:KPK_1899"/>
<dbReference type="HOGENOM" id="CLU_052665_0_0_6"/>
<dbReference type="Proteomes" id="UP000001734">
    <property type="component" value="Chromosome"/>
</dbReference>
<dbReference type="GO" id="GO:0008168">
    <property type="term" value="F:methyltransferase activity"/>
    <property type="evidence" value="ECO:0007669"/>
    <property type="project" value="TreeGrafter"/>
</dbReference>
<dbReference type="GO" id="GO:0016765">
    <property type="term" value="F:transferase activity, transferring alkyl or aryl (other than methyl) groups"/>
    <property type="evidence" value="ECO:0007669"/>
    <property type="project" value="UniProtKB-UniRule"/>
</dbReference>
<dbReference type="GO" id="GO:0002098">
    <property type="term" value="P:tRNA wobble uridine modification"/>
    <property type="evidence" value="ECO:0007669"/>
    <property type="project" value="InterPro"/>
</dbReference>
<dbReference type="CDD" id="cd02440">
    <property type="entry name" value="AdoMet_MTases"/>
    <property type="match status" value="1"/>
</dbReference>
<dbReference type="Gene3D" id="3.40.50.150">
    <property type="entry name" value="Vaccinia Virus protein VP39"/>
    <property type="match status" value="1"/>
</dbReference>
<dbReference type="HAMAP" id="MF_01590">
    <property type="entry name" value="tRNA_carboxymethyltr_CmoB"/>
    <property type="match status" value="1"/>
</dbReference>
<dbReference type="InterPro" id="IPR010017">
    <property type="entry name" value="CmoB"/>
</dbReference>
<dbReference type="InterPro" id="IPR027555">
    <property type="entry name" value="Mo5U34_MeTrfas-like"/>
</dbReference>
<dbReference type="InterPro" id="IPR029063">
    <property type="entry name" value="SAM-dependent_MTases_sf"/>
</dbReference>
<dbReference type="NCBIfam" id="NF011650">
    <property type="entry name" value="PRK15068.1"/>
    <property type="match status" value="1"/>
</dbReference>
<dbReference type="NCBIfam" id="TIGR00452">
    <property type="entry name" value="tRNA 5-methoxyuridine(34)/uridine 5-oxyacetic acid(34) synthase CmoB"/>
    <property type="match status" value="1"/>
</dbReference>
<dbReference type="PANTHER" id="PTHR43464">
    <property type="entry name" value="METHYLTRANSFERASE"/>
    <property type="match status" value="1"/>
</dbReference>
<dbReference type="PANTHER" id="PTHR43464:SF95">
    <property type="entry name" value="TRNA U34 CARBOXYMETHYLTRANSFERASE"/>
    <property type="match status" value="1"/>
</dbReference>
<dbReference type="Pfam" id="PF08003">
    <property type="entry name" value="Methyltransf_9"/>
    <property type="match status" value="1"/>
</dbReference>
<dbReference type="SUPFAM" id="SSF53335">
    <property type="entry name" value="S-adenosyl-L-methionine-dependent methyltransferases"/>
    <property type="match status" value="1"/>
</dbReference>